<comment type="function">
    <text evidence="1">Required for rescue of stalled ribosomes mediated by trans-translation. Binds to transfer-messenger RNA (tmRNA), required for stable association of tmRNA with ribosomes. tmRNA and SmpB together mimic tRNA shape, replacing the anticodon stem-loop with SmpB. tmRNA is encoded by the ssrA gene; the 2 termini fold to resemble tRNA(Ala) and it encodes a 'tag peptide', a short internal open reading frame. During trans-translation Ala-aminoacylated tmRNA acts like a tRNA, entering the A-site of stalled ribosomes, displacing the stalled mRNA. The ribosome then switches to translate the ORF on the tmRNA; the nascent peptide is terminated with the 'tag peptide' encoded by the tmRNA and targeted for degradation. The ribosome is freed to recommence translation, which seems to be the essential function of trans-translation.</text>
</comment>
<comment type="subcellular location">
    <subcellularLocation>
        <location evidence="1">Cytoplasm</location>
    </subcellularLocation>
    <text evidence="1">The tmRNA-SmpB complex associates with stalled 70S ribosomes.</text>
</comment>
<comment type="similarity">
    <text evidence="1">Belongs to the SmpB family.</text>
</comment>
<evidence type="ECO:0000255" key="1">
    <source>
        <dbReference type="HAMAP-Rule" id="MF_00023"/>
    </source>
</evidence>
<evidence type="ECO:0000256" key="2">
    <source>
        <dbReference type="SAM" id="MobiDB-lite"/>
    </source>
</evidence>
<dbReference type="EMBL" id="CP000509">
    <property type="protein sequence ID" value="ABL80786.1"/>
    <property type="molecule type" value="Genomic_DNA"/>
</dbReference>
<dbReference type="RefSeq" id="WP_011754734.1">
    <property type="nucleotide sequence ID" value="NC_008699.1"/>
</dbReference>
<dbReference type="SMR" id="A1SG51"/>
<dbReference type="STRING" id="196162.Noca_1272"/>
<dbReference type="KEGG" id="nca:Noca_1272"/>
<dbReference type="eggNOG" id="COG0691">
    <property type="taxonomic scope" value="Bacteria"/>
</dbReference>
<dbReference type="HOGENOM" id="CLU_108953_2_1_11"/>
<dbReference type="OrthoDB" id="9805462at2"/>
<dbReference type="Proteomes" id="UP000000640">
    <property type="component" value="Chromosome"/>
</dbReference>
<dbReference type="GO" id="GO:0005829">
    <property type="term" value="C:cytosol"/>
    <property type="evidence" value="ECO:0007669"/>
    <property type="project" value="TreeGrafter"/>
</dbReference>
<dbReference type="GO" id="GO:0003723">
    <property type="term" value="F:RNA binding"/>
    <property type="evidence" value="ECO:0007669"/>
    <property type="project" value="UniProtKB-UniRule"/>
</dbReference>
<dbReference type="GO" id="GO:0070929">
    <property type="term" value="P:trans-translation"/>
    <property type="evidence" value="ECO:0007669"/>
    <property type="project" value="UniProtKB-UniRule"/>
</dbReference>
<dbReference type="CDD" id="cd09294">
    <property type="entry name" value="SmpB"/>
    <property type="match status" value="1"/>
</dbReference>
<dbReference type="Gene3D" id="2.40.280.10">
    <property type="match status" value="1"/>
</dbReference>
<dbReference type="HAMAP" id="MF_00023">
    <property type="entry name" value="SmpB"/>
    <property type="match status" value="1"/>
</dbReference>
<dbReference type="InterPro" id="IPR023620">
    <property type="entry name" value="SmpB"/>
</dbReference>
<dbReference type="InterPro" id="IPR000037">
    <property type="entry name" value="SsrA-bd_prot"/>
</dbReference>
<dbReference type="InterPro" id="IPR020081">
    <property type="entry name" value="SsrA-bd_prot_CS"/>
</dbReference>
<dbReference type="NCBIfam" id="NF003843">
    <property type="entry name" value="PRK05422.1"/>
    <property type="match status" value="1"/>
</dbReference>
<dbReference type="NCBIfam" id="TIGR00086">
    <property type="entry name" value="smpB"/>
    <property type="match status" value="1"/>
</dbReference>
<dbReference type="PANTHER" id="PTHR30308:SF2">
    <property type="entry name" value="SSRA-BINDING PROTEIN"/>
    <property type="match status" value="1"/>
</dbReference>
<dbReference type="PANTHER" id="PTHR30308">
    <property type="entry name" value="TMRNA-BINDING COMPONENT OF TRANS-TRANSLATION TAGGING COMPLEX"/>
    <property type="match status" value="1"/>
</dbReference>
<dbReference type="Pfam" id="PF01668">
    <property type="entry name" value="SmpB"/>
    <property type="match status" value="1"/>
</dbReference>
<dbReference type="SUPFAM" id="SSF74982">
    <property type="entry name" value="Small protein B (SmpB)"/>
    <property type="match status" value="1"/>
</dbReference>
<dbReference type="PROSITE" id="PS01317">
    <property type="entry name" value="SSRP"/>
    <property type="match status" value="1"/>
</dbReference>
<proteinExistence type="inferred from homology"/>
<accession>A1SG51</accession>
<gene>
    <name evidence="1" type="primary">smpB</name>
    <name type="ordered locus">Noca_1272</name>
</gene>
<sequence length="159" mass="18192">MAKEQGRKLIAQNKKARHDYHIEDTYEAGLVLQGTEVKSLRQGRASLVDGFVDIDRGEAWLHGVHIPEYSQGTWTNHAARRKRKLLLNRDEIDKIERRVNEKGLTVVPLALYFKDGRAKVEIALAKGKKSWDKRAALAERQANRETEQAVGRRLKGMHD</sequence>
<name>SSRP_NOCSJ</name>
<reference key="1">
    <citation type="submission" date="2006-12" db="EMBL/GenBank/DDBJ databases">
        <title>Complete sequence of chromosome 1 of Nocardioides sp. JS614.</title>
        <authorList>
            <person name="Copeland A."/>
            <person name="Lucas S."/>
            <person name="Lapidus A."/>
            <person name="Barry K."/>
            <person name="Detter J.C."/>
            <person name="Glavina del Rio T."/>
            <person name="Hammon N."/>
            <person name="Israni S."/>
            <person name="Dalin E."/>
            <person name="Tice H."/>
            <person name="Pitluck S."/>
            <person name="Thompson L.S."/>
            <person name="Brettin T."/>
            <person name="Bruce D."/>
            <person name="Han C."/>
            <person name="Tapia R."/>
            <person name="Schmutz J."/>
            <person name="Larimer F."/>
            <person name="Land M."/>
            <person name="Hauser L."/>
            <person name="Kyrpides N."/>
            <person name="Kim E."/>
            <person name="Mattes T."/>
            <person name="Gossett J."/>
            <person name="Richardson P."/>
        </authorList>
    </citation>
    <scope>NUCLEOTIDE SEQUENCE [LARGE SCALE GENOMIC DNA]</scope>
    <source>
        <strain>ATCC BAA-499 / JS614</strain>
    </source>
</reference>
<feature type="chain" id="PRO_1000002095" description="SsrA-binding protein">
    <location>
        <begin position="1"/>
        <end position="159"/>
    </location>
</feature>
<feature type="region of interest" description="Disordered" evidence="2">
    <location>
        <begin position="137"/>
        <end position="159"/>
    </location>
</feature>
<feature type="compositionally biased region" description="Basic and acidic residues" evidence="2">
    <location>
        <begin position="137"/>
        <end position="147"/>
    </location>
</feature>
<organism>
    <name type="scientific">Nocardioides sp. (strain ATCC BAA-499 / JS614)</name>
    <dbReference type="NCBI Taxonomy" id="196162"/>
    <lineage>
        <taxon>Bacteria</taxon>
        <taxon>Bacillati</taxon>
        <taxon>Actinomycetota</taxon>
        <taxon>Actinomycetes</taxon>
        <taxon>Propionibacteriales</taxon>
        <taxon>Nocardioidaceae</taxon>
        <taxon>Nocardioides</taxon>
    </lineage>
</organism>
<keyword id="KW-0963">Cytoplasm</keyword>
<keyword id="KW-1185">Reference proteome</keyword>
<keyword id="KW-0694">RNA-binding</keyword>
<protein>
    <recommendedName>
        <fullName evidence="1">SsrA-binding protein</fullName>
    </recommendedName>
    <alternativeName>
        <fullName evidence="1">Small protein B</fullName>
    </alternativeName>
</protein>